<proteinExistence type="evidence at protein level"/>
<name>XPA_HUMAN</name>
<comment type="function">
    <text evidence="8 10">Involved in DNA nucleotide excision repair (NER). Initiates repair by binding to damaged sites with various affinities, depending on the photoproduct and the transcriptional state of the region. Required for UV-induced CHEK1 phosphorylation and the recruitment of CEP164 to cyclobutane pyrimidine dimmers (CPD), sites of DNA damage after UV irradiation (PubMed:19197159). During NER stimulates the 5'-3' helicase activity of XPD/ERCC2 and the DNA translocase activity of XPB/ERCC3 (PubMed:31253769). Connects XPD/ERCC2 and XPB/ERCC3 during NER, retaining DNA near the XPB/ERCC3 active site, and stabilizing the complex in a different conformation than in transcribing TFIIH (PubMed:31253769).</text>
</comment>
<comment type="subunit">
    <text evidence="3 8 9 10 11 15">Interacts with GPN1. Interacts with RPA1 and RPA2; the interaction is direct and associates XPA with the RPA complex. Interacts (via N-terminus) with CEP164 upon UV irradiation. Interacts with HERC2. During NER binds XPD/ERCC2 and XPB/ERCC3 of transcription factor IIH (TFIIH), bridging the 2 proteins (PubMed:31253769).</text>
</comment>
<comment type="interaction">
    <interactant intactId="EBI-295222">
        <id>P23025</id>
    </interactant>
    <interactant intactId="EBI-5458244">
        <id>Q99856</id>
        <label>ARID3A</label>
    </interactant>
    <organismsDiffer>false</organismsDiffer>
    <experiments>3</experiments>
</comment>
<comment type="interaction">
    <interactant intactId="EBI-295222">
        <id>P23025</id>
    </interactant>
    <interactant intactId="EBI-739789">
        <id>Q92997</id>
        <label>DVL3</label>
    </interactant>
    <organismsDiffer>false</organismsDiffer>
    <experiments>3</experiments>
</comment>
<comment type="interaction">
    <interactant intactId="EBI-295222">
        <id>P23025</id>
    </interactant>
    <interactant intactId="EBI-750962">
        <id>P07992</id>
        <label>ERCC1</label>
    </interactant>
    <organismsDiffer>false</organismsDiffer>
    <experiments>9</experiments>
</comment>
<comment type="interaction">
    <interactant intactId="EBI-295222">
        <id>P23025</id>
    </interactant>
    <interactant intactId="EBI-12699417">
        <id>P07992-3</id>
        <label>ERCC1</label>
    </interactant>
    <organismsDiffer>false</organismsDiffer>
    <experiments>3</experiments>
</comment>
<comment type="interaction">
    <interactant intactId="EBI-295222">
        <id>P23025</id>
    </interactant>
    <interactant intactId="EBI-1058922">
        <id>O95714</id>
        <label>HERC2</label>
    </interactant>
    <organismsDiffer>false</organismsDiffer>
    <experiments>6</experiments>
</comment>
<comment type="interaction">
    <interactant intactId="EBI-295222">
        <id>P23025</id>
    </interactant>
    <interactant intactId="EBI-16439278">
        <id>Q6FHY5</id>
        <label>MEOX2</label>
    </interactant>
    <organismsDiffer>false</organismsDiffer>
    <experiments>3</experiments>
</comment>
<comment type="interaction">
    <interactant intactId="EBI-295222">
        <id>P23025</id>
    </interactant>
    <interactant intactId="EBI-928842">
        <id>Q9GZM8</id>
        <label>NDEL1</label>
    </interactant>
    <organismsDiffer>false</organismsDiffer>
    <experiments>6</experiments>
</comment>
<comment type="interaction">
    <interactant intactId="EBI-295222">
        <id>P23025</id>
    </interactant>
    <interactant intactId="EBI-79165">
        <id>Q9NRD5</id>
        <label>PICK1</label>
    </interactant>
    <organismsDiffer>false</organismsDiffer>
    <experiments>3</experiments>
</comment>
<comment type="interaction">
    <interactant intactId="EBI-295222">
        <id>P23025</id>
    </interactant>
    <interactant intactId="EBI-1055079">
        <id>O15160</id>
        <label>POLR1C</label>
    </interactant>
    <organismsDiffer>false</organismsDiffer>
    <experiments>3</experiments>
</comment>
<comment type="interaction">
    <interactant intactId="EBI-295222">
        <id>P23025</id>
    </interactant>
    <interactant intactId="EBI-372273">
        <id>P20618</id>
        <label>PSMB1</label>
    </interactant>
    <organismsDiffer>false</organismsDiffer>
    <experiments>3</experiments>
</comment>
<comment type="interaction">
    <interactant intactId="EBI-295222">
        <id>P23025</id>
    </interactant>
    <interactant intactId="EBI-621404">
        <id>P15927</id>
        <label>RPA2</label>
    </interactant>
    <organismsDiffer>false</organismsDiffer>
    <experiments>9</experiments>
</comment>
<comment type="interaction">
    <interactant intactId="EBI-295222">
        <id>P23025</id>
    </interactant>
    <interactant intactId="EBI-1802965">
        <id>Q96EB6</id>
        <label>SIRT1</label>
    </interactant>
    <organismsDiffer>false</organismsDiffer>
    <experiments>8</experiments>
</comment>
<comment type="interaction">
    <interactant intactId="EBI-295222">
        <id>P23025</id>
    </interactant>
    <interactant intactId="EBI-2902468">
        <id>P12757</id>
        <label>SKIL</label>
    </interactant>
    <organismsDiffer>false</organismsDiffer>
    <experiments>3</experiments>
</comment>
<comment type="interaction">
    <interactant intactId="EBI-295222">
        <id>P23025</id>
    </interactant>
    <interactant intactId="EBI-4401902">
        <id>O15079</id>
        <label>SNPH</label>
    </interactant>
    <organismsDiffer>false</organismsDiffer>
    <experiments>3</experiments>
</comment>
<comment type="interaction">
    <interactant intactId="EBI-295222">
        <id>P23025</id>
    </interactant>
    <interactant intactId="EBI-3258000">
        <id>Q9P0N9</id>
        <label>TBC1D7</label>
    </interactant>
    <organismsDiffer>false</organismsDiffer>
    <experiments>3</experiments>
</comment>
<comment type="interaction">
    <interactant intactId="EBI-295222">
        <id>P23025</id>
    </interactant>
    <interactant intactId="EBI-719493">
        <id>P14373</id>
        <label>TRIM27</label>
    </interactant>
    <organismsDiffer>false</organismsDiffer>
    <experiments>6</experiments>
</comment>
<comment type="interaction">
    <interactant intactId="EBI-295222">
        <id>P23025</id>
    </interactant>
    <interactant intactId="EBI-7207091">
        <id>O14972</id>
        <label>VPS26C</label>
    </interactant>
    <organismsDiffer>false</organismsDiffer>
    <experiments>3</experiments>
</comment>
<comment type="interaction">
    <interactant intactId="EBI-295222">
        <id>P23025</id>
    </interactant>
    <interactant intactId="EBI-295232">
        <id>Q9HCS7</id>
        <label>XAB2</label>
    </interactant>
    <organismsDiffer>false</organismsDiffer>
    <experiments>2</experiments>
</comment>
<comment type="interaction">
    <interactant intactId="EBI-295222">
        <id>P23025</id>
    </interactant>
    <interactant intactId="EBI-625509">
        <id>Q8N720</id>
        <label>ZNF655</label>
    </interactant>
    <organismsDiffer>false</organismsDiffer>
    <experiments>3</experiments>
</comment>
<comment type="subcellular location">
    <subcellularLocation>
        <location evidence="7 8 9">Nucleus</location>
    </subcellularLocation>
</comment>
<comment type="tissue specificity">
    <text evidence="7 13">Expressed in various cell lines and in skin fibroblasts.</text>
</comment>
<comment type="PTM">
    <text evidence="6">ATR-dependent phosphorylation of XPA at Ser-196 is important for cell survival in response to UV damage.</text>
</comment>
<comment type="PTM">
    <text evidence="9">Ubiquitinated by HERC2 leading to degradation by the proteasome.</text>
</comment>
<comment type="disease" evidence="2 4 5 12 14">
    <disease id="DI-01155">
        <name>Xeroderma pigmentosum complementation group A</name>
        <acronym>XP-A</acronym>
        <description>An autosomal recessive pigmentary skin disorder characterized by solar hypersensitivity of the skin, high predisposition for developing cancers on areas exposed to sunlight and, in some cases, neurological abnormalities. The skin develops marked freckling and other pigmentation abnormalities. XP-A patients show the most severe skin symptoms and progressive neurological disorders.</description>
        <dbReference type="MIM" id="278700"/>
    </disease>
    <text>The disease is caused by variants affecting the gene represented in this entry.</text>
</comment>
<comment type="similarity">
    <text evidence="17">Belongs to the XPA family.</text>
</comment>
<comment type="online information" name="Atlas of Genetics and Cytogenetics in Oncology and Haematology">
    <link uri="https://atlasgeneticsoncology.org/gene/104/XPA"/>
</comment>
<comment type="online information" name="Protein Spotlight">
    <link uri="https://www.proteinspotlight.org/back_issues/142"/>
    <text>Nature's flaws - Issue 142 of September 2012</text>
</comment>
<accession>P23025</accession>
<accession>Q5T1U9</accession>
<accession>Q6LCW7</accession>
<accession>Q6LD02</accession>
<sequence>MAAADGALPEAAALEQPAELPASVRASIERKRQRALMLRQARLAARPYSATAAAATGGMANVKAAPKIIDTGGGFILEEEEEEEQKIGKVVHQPGPVMEFDYVICEECGKEFMDSYLMNHFDLPTCDNCRDADDKHKLITKTEAKQEYLLKDCDLEKREPPLKFIVKKNPHHSQWGDMKLYLKLQIVKRSLEVWGSQEALEEAKEVRQENREKMKQKKFDKKVKELRRAVRSSVWKRETIVHQHEYGPEENLEDDMYRKTCTMCGHELTYEKM</sequence>
<protein>
    <recommendedName>
        <fullName>DNA repair protein complementing XP-A cells</fullName>
    </recommendedName>
    <alternativeName>
        <fullName>Xeroderma pigmentosum group A-complementing protein</fullName>
    </alternativeName>
</protein>
<gene>
    <name type="primary">XPA</name>
    <name type="synonym">XPAC</name>
</gene>
<reference key="1">
    <citation type="journal article" date="1990" name="Nature">
        <title>Analysis of a human DNA excision repair gene involved in group A Xeroderma pigmentosum and containing a zinc-finger domain.</title>
        <authorList>
            <person name="Tanaka K."/>
            <person name="Miura N."/>
            <person name="Satokata I."/>
            <person name="Miyamoto I."/>
            <person name="Yoshida M.C."/>
            <person name="Satoh Y."/>
            <person name="Kondo S."/>
            <person name="Yasui A."/>
            <person name="Okayama H."/>
            <person name="Okada Y."/>
        </authorList>
    </citation>
    <scope>NUCLEOTIDE SEQUENCE [MRNA]</scope>
    <source>
        <tissue>Fibroblast</tissue>
    </source>
</reference>
<reference key="2">
    <citation type="submission" date="2003-05" db="EMBL/GenBank/DDBJ databases">
        <title>Cloning of human full-length CDSs in BD Creator(TM) system donor vector.</title>
        <authorList>
            <person name="Kalnine N."/>
            <person name="Chen X."/>
            <person name="Rolfs A."/>
            <person name="Halleck A."/>
            <person name="Hines L."/>
            <person name="Eisenstein S."/>
            <person name="Koundinya M."/>
            <person name="Raphael J."/>
            <person name="Moreira D."/>
            <person name="Kelley T."/>
            <person name="LaBaer J."/>
            <person name="Lin Y."/>
            <person name="Phelan M."/>
            <person name="Farmer A."/>
        </authorList>
    </citation>
    <scope>NUCLEOTIDE SEQUENCE [LARGE SCALE MRNA]</scope>
</reference>
<reference key="3">
    <citation type="submission" date="2002-04" db="EMBL/GenBank/DDBJ databases">
        <authorList>
            <consortium name="NIEHS SNPs program"/>
        </authorList>
    </citation>
    <scope>NUCLEOTIDE SEQUENCE [GENOMIC DNA]</scope>
    <scope>VARIANT GLU-78 DEL</scope>
</reference>
<reference key="4">
    <citation type="journal article" date="2004" name="Nature">
        <title>DNA sequence and analysis of human chromosome 9.</title>
        <authorList>
            <person name="Humphray S.J."/>
            <person name="Oliver K."/>
            <person name="Hunt A.R."/>
            <person name="Plumb R.W."/>
            <person name="Loveland J.E."/>
            <person name="Howe K.L."/>
            <person name="Andrews T.D."/>
            <person name="Searle S."/>
            <person name="Hunt S.E."/>
            <person name="Scott C.E."/>
            <person name="Jones M.C."/>
            <person name="Ainscough R."/>
            <person name="Almeida J.P."/>
            <person name="Ambrose K.D."/>
            <person name="Ashwell R.I.S."/>
            <person name="Babbage A.K."/>
            <person name="Babbage S."/>
            <person name="Bagguley C.L."/>
            <person name="Bailey J."/>
            <person name="Banerjee R."/>
            <person name="Barker D.J."/>
            <person name="Barlow K.F."/>
            <person name="Bates K."/>
            <person name="Beasley H."/>
            <person name="Beasley O."/>
            <person name="Bird C.P."/>
            <person name="Bray-Allen S."/>
            <person name="Brown A.J."/>
            <person name="Brown J.Y."/>
            <person name="Burford D."/>
            <person name="Burrill W."/>
            <person name="Burton J."/>
            <person name="Carder C."/>
            <person name="Carter N.P."/>
            <person name="Chapman J.C."/>
            <person name="Chen Y."/>
            <person name="Clarke G."/>
            <person name="Clark S.Y."/>
            <person name="Clee C.M."/>
            <person name="Clegg S."/>
            <person name="Collier R.E."/>
            <person name="Corby N."/>
            <person name="Crosier M."/>
            <person name="Cummings A.T."/>
            <person name="Davies J."/>
            <person name="Dhami P."/>
            <person name="Dunn M."/>
            <person name="Dutta I."/>
            <person name="Dyer L.W."/>
            <person name="Earthrowl M.E."/>
            <person name="Faulkner L."/>
            <person name="Fleming C.J."/>
            <person name="Frankish A."/>
            <person name="Frankland J.A."/>
            <person name="French L."/>
            <person name="Fricker D.G."/>
            <person name="Garner P."/>
            <person name="Garnett J."/>
            <person name="Ghori J."/>
            <person name="Gilbert J.G.R."/>
            <person name="Glison C."/>
            <person name="Grafham D.V."/>
            <person name="Gribble S."/>
            <person name="Griffiths C."/>
            <person name="Griffiths-Jones S."/>
            <person name="Grocock R."/>
            <person name="Guy J."/>
            <person name="Hall R.E."/>
            <person name="Hammond S."/>
            <person name="Harley J.L."/>
            <person name="Harrison E.S.I."/>
            <person name="Hart E.A."/>
            <person name="Heath P.D."/>
            <person name="Henderson C.D."/>
            <person name="Hopkins B.L."/>
            <person name="Howard P.J."/>
            <person name="Howden P.J."/>
            <person name="Huckle E."/>
            <person name="Johnson C."/>
            <person name="Johnson D."/>
            <person name="Joy A.A."/>
            <person name="Kay M."/>
            <person name="Keenan S."/>
            <person name="Kershaw J.K."/>
            <person name="Kimberley A.M."/>
            <person name="King A."/>
            <person name="Knights A."/>
            <person name="Laird G.K."/>
            <person name="Langford C."/>
            <person name="Lawlor S."/>
            <person name="Leongamornlert D.A."/>
            <person name="Leversha M."/>
            <person name="Lloyd C."/>
            <person name="Lloyd D.M."/>
            <person name="Lovell J."/>
            <person name="Martin S."/>
            <person name="Mashreghi-Mohammadi M."/>
            <person name="Matthews L."/>
            <person name="McLaren S."/>
            <person name="McLay K.E."/>
            <person name="McMurray A."/>
            <person name="Milne S."/>
            <person name="Nickerson T."/>
            <person name="Nisbett J."/>
            <person name="Nordsiek G."/>
            <person name="Pearce A.V."/>
            <person name="Peck A.I."/>
            <person name="Porter K.M."/>
            <person name="Pandian R."/>
            <person name="Pelan S."/>
            <person name="Phillimore B."/>
            <person name="Povey S."/>
            <person name="Ramsey Y."/>
            <person name="Rand V."/>
            <person name="Scharfe M."/>
            <person name="Sehra H.K."/>
            <person name="Shownkeen R."/>
            <person name="Sims S.K."/>
            <person name="Skuce C.D."/>
            <person name="Smith M."/>
            <person name="Steward C.A."/>
            <person name="Swarbreck D."/>
            <person name="Sycamore N."/>
            <person name="Tester J."/>
            <person name="Thorpe A."/>
            <person name="Tracey A."/>
            <person name="Tromans A."/>
            <person name="Thomas D.W."/>
            <person name="Wall M."/>
            <person name="Wallis J.M."/>
            <person name="West A.P."/>
            <person name="Whitehead S.L."/>
            <person name="Willey D.L."/>
            <person name="Williams S.A."/>
            <person name="Wilming L."/>
            <person name="Wray P.W."/>
            <person name="Young L."/>
            <person name="Ashurst J.L."/>
            <person name="Coulson A."/>
            <person name="Blocker H."/>
            <person name="Durbin R.M."/>
            <person name="Sulston J.E."/>
            <person name="Hubbard T."/>
            <person name="Jackson M.J."/>
            <person name="Bentley D.R."/>
            <person name="Beck S."/>
            <person name="Rogers J."/>
            <person name="Dunham I."/>
        </authorList>
    </citation>
    <scope>NUCLEOTIDE SEQUENCE [LARGE SCALE GENOMIC DNA]</scope>
</reference>
<reference key="5">
    <citation type="submission" date="2005-07" db="EMBL/GenBank/DDBJ databases">
        <authorList>
            <person name="Mural R.J."/>
            <person name="Istrail S."/>
            <person name="Sutton G.G."/>
            <person name="Florea L."/>
            <person name="Halpern A.L."/>
            <person name="Mobarry C.M."/>
            <person name="Lippert R."/>
            <person name="Walenz B."/>
            <person name="Shatkay H."/>
            <person name="Dew I."/>
            <person name="Miller J.R."/>
            <person name="Flanigan M.J."/>
            <person name="Edwards N.J."/>
            <person name="Bolanos R."/>
            <person name="Fasulo D."/>
            <person name="Halldorsson B.V."/>
            <person name="Hannenhalli S."/>
            <person name="Turner R."/>
            <person name="Yooseph S."/>
            <person name="Lu F."/>
            <person name="Nusskern D.R."/>
            <person name="Shue B.C."/>
            <person name="Zheng X.H."/>
            <person name="Zhong F."/>
            <person name="Delcher A.L."/>
            <person name="Huson D.H."/>
            <person name="Kravitz S.A."/>
            <person name="Mouchard L."/>
            <person name="Reinert K."/>
            <person name="Remington K.A."/>
            <person name="Clark A.G."/>
            <person name="Waterman M.S."/>
            <person name="Eichler E.E."/>
            <person name="Adams M.D."/>
            <person name="Hunkapiller M.W."/>
            <person name="Myers E.W."/>
            <person name="Venter J.C."/>
        </authorList>
    </citation>
    <scope>NUCLEOTIDE SEQUENCE [LARGE SCALE GENOMIC DNA]</scope>
</reference>
<reference key="6">
    <citation type="journal article" date="2004" name="Genome Res.">
        <title>The status, quality, and expansion of the NIH full-length cDNA project: the Mammalian Gene Collection (MGC).</title>
        <authorList>
            <consortium name="The MGC Project Team"/>
        </authorList>
    </citation>
    <scope>NUCLEOTIDE SEQUENCE [LARGE SCALE MRNA]</scope>
    <source>
        <tissue>B-cell</tissue>
    </source>
</reference>
<reference key="7">
    <citation type="journal article" date="1993" name="Gene">
        <title>Genomic characterization of the human DNA excision repair-controlling gene XPAC.</title>
        <authorList>
            <person name="Satokata I."/>
            <person name="Iwai K."/>
            <person name="Matsuda T."/>
            <person name="Okada Y."/>
            <person name="Tanaka K."/>
        </authorList>
    </citation>
    <scope>NUCLEOTIDE SEQUENCE [MRNA] OF 1-57</scope>
    <source>
        <tissue>Spermatocyte</tissue>
    </source>
</reference>
<reference key="8">
    <citation type="journal article" date="1995" name="Nature">
        <title>RPA involvement in the damage-recognition and incision steps of nucleotide excision repair.</title>
        <authorList>
            <person name="He Z."/>
            <person name="Henricksen L.A."/>
            <person name="Wold M.S."/>
            <person name="Ingles C.J."/>
        </authorList>
    </citation>
    <scope>INTERACTION WITH RPA1 AND RPA2</scope>
</reference>
<reference key="9">
    <citation type="journal article" date="1995" name="Gene">
        <title>Characterization of the human XPA promoter.</title>
        <authorList>
            <person name="Topping R.S."/>
            <person name="Myrand S.P."/>
            <person name="Williams B.L."/>
            <person name="Albert J.C."/>
            <person name="States J.C."/>
        </authorList>
    </citation>
    <scope>NUCLEOTIDE SEQUENCE [GENOMIC DNA] OF 59-273</scope>
    <scope>TISSUE SPECIFICITY</scope>
    <source>
        <tissue>Placenta</tissue>
    </source>
</reference>
<reference key="10">
    <citation type="journal article" date="1991" name="J. Biol. Chem.">
        <title>Identification and characterization of xpac protein, the gene product of the human XPAC (Xeroderma pigmentosum group A complementing) gene.</title>
        <authorList>
            <person name="Miura N."/>
            <person name="Miyamoto I."/>
            <person name="Asahina H."/>
            <person name="Satokata I."/>
            <person name="Tanaka K."/>
            <person name="Okada Y."/>
        </authorList>
    </citation>
    <scope>SUBCELLULAR LOCATION</scope>
    <scope>TISSUE SPECIFICITY</scope>
</reference>
<reference key="11">
    <citation type="journal article" date="1992" name="J. Biol. Chem.">
        <title>Mutational analysis of the structure and function of the Xeroderma pigmentosum group A complementing protein. Identification of essential domains for nuclear localization and DNA excision repair.</title>
        <authorList>
            <person name="Miyamoto I."/>
            <person name="Miura N."/>
            <person name="Niwa H."/>
            <person name="Miyazaki J."/>
            <person name="Tanaka K."/>
        </authorList>
    </citation>
    <scope>MUTAGENESIS</scope>
</reference>
<reference key="12">
    <citation type="journal article" date="1993" name="Jpn. J. Hum. Genet.">
        <title>Molecular analysis of Xeroderma pigmentosum group A gene.</title>
        <authorList>
            <person name="Tanaka K."/>
        </authorList>
    </citation>
    <scope>REVIEW ON VARIANTS XP-A</scope>
</reference>
<reference key="13">
    <citation type="journal article" date="1999" name="Hum. Mutat.">
        <title>A summary of mutations in the UV-sensitive disorders: xeroderma pigmentosum, Cockayne syndrome, and trichothiodystrophy.</title>
        <authorList>
            <person name="Cleaver J.E."/>
            <person name="Thompson L.H."/>
            <person name="Richardson A.S."/>
            <person name="States J.C."/>
        </authorList>
    </citation>
    <scope>REVIEW ON VARIANTS XP-A</scope>
</reference>
<reference key="14">
    <citation type="journal article" date="2006" name="Cancer Res.">
        <title>Phosphorylation of nucleotide excision repair factor xeroderma pigmentosum group A by ataxia telangiectasia mutated and Rad3-related-dependent checkpoint pathway promotes cell survival in response to UV irradiation.</title>
        <authorList>
            <person name="Wu X."/>
            <person name="Shell S.M."/>
            <person name="Yang Z."/>
            <person name="Zou Y."/>
        </authorList>
    </citation>
    <scope>PHOSPHORYLATION AT SER-196</scope>
</reference>
<reference key="15">
    <citation type="journal article" date="2009" name="Anal. Chem.">
        <title>Lys-N and trypsin cover complementary parts of the phosphoproteome in a refined SCX-based approach.</title>
        <authorList>
            <person name="Gauci S."/>
            <person name="Helbig A.O."/>
            <person name="Slijper M."/>
            <person name="Krijgsveld J."/>
            <person name="Heck A.J."/>
            <person name="Mohammed S."/>
        </authorList>
    </citation>
    <scope>ACETYLATION [LARGE SCALE ANALYSIS] AT ALA-2</scope>
    <scope>CLEAVAGE OF INITIATOR METHIONINE [LARGE SCALE ANALYSIS]</scope>
    <scope>IDENTIFICATION BY MASS SPECTROMETRY [LARGE SCALE ANALYSIS]</scope>
</reference>
<reference key="16">
    <citation type="journal article" date="2009" name="Cell Cycle">
        <title>UV-dependent interaction between Cep164 and XPA mediates localization of Cep164 at sites of DNA damage and UV sensitivity.</title>
        <authorList>
            <person name="Pan Y.R."/>
            <person name="Lee E.Y."/>
        </authorList>
    </citation>
    <scope>FUNCTION</scope>
    <scope>INTERACTION WITH CEP164</scope>
    <scope>SUBCELLULAR LOCATION</scope>
</reference>
<reference key="17">
    <citation type="journal article" date="2010" name="Proc. Natl. Acad. Sci. U.S.A.">
        <title>Circadian control of XPA and excision repair of cisplatin-DNA damage by cryptochrome and HERC2 ubiquitin ligase.</title>
        <authorList>
            <person name="Kang T.H."/>
            <person name="Lindsey-Boltz L.A."/>
            <person name="Reardon J.T."/>
            <person name="Sancar A."/>
        </authorList>
    </citation>
    <scope>UBIQUITINATION</scope>
    <scope>SUBCELLULAR LOCATION</scope>
    <scope>INTERACTION WITH HERC2</scope>
    <source>
        <tissue>Embryonic kidney</tissue>
        <tissue>Lung adenocarcinoma</tissue>
    </source>
</reference>
<reference key="18">
    <citation type="journal article" date="2012" name="Proc. Natl. Acad. Sci. U.S.A.">
        <title>N-terminal acetylome analyses and functional insights of the N-terminal acetyltransferase NatB.</title>
        <authorList>
            <person name="Van Damme P."/>
            <person name="Lasa M."/>
            <person name="Polevoda B."/>
            <person name="Gazquez C."/>
            <person name="Elosegui-Artola A."/>
            <person name="Kim D.S."/>
            <person name="De Juan-Pardo E."/>
            <person name="Demeyer K."/>
            <person name="Hole K."/>
            <person name="Larrea E."/>
            <person name="Timmerman E."/>
            <person name="Prieto J."/>
            <person name="Arnesen T."/>
            <person name="Sherman F."/>
            <person name="Gevaert K."/>
            <person name="Aldabe R."/>
        </authorList>
    </citation>
    <scope>ACETYLATION [LARGE SCALE ANALYSIS] AT ALA-2</scope>
    <scope>CLEAVAGE OF INITIATOR METHIONINE [LARGE SCALE ANALYSIS]</scope>
    <scope>IDENTIFICATION BY MASS SPECTROMETRY [LARGE SCALE ANALYSIS]</scope>
</reference>
<reference key="19">
    <citation type="journal article" date="2013" name="J. Proteome Res.">
        <title>Toward a comprehensive characterization of a human cancer cell phosphoproteome.</title>
        <authorList>
            <person name="Zhou H."/>
            <person name="Di Palma S."/>
            <person name="Preisinger C."/>
            <person name="Peng M."/>
            <person name="Polat A.N."/>
            <person name="Heck A.J."/>
            <person name="Mohammed S."/>
        </authorList>
    </citation>
    <scope>PHOSPHORYLATION [LARGE SCALE ANALYSIS] AT SER-196</scope>
    <scope>IDENTIFICATION BY MASS SPECTROMETRY [LARGE SCALE ANALYSIS]</scope>
    <source>
        <tissue>Erythroleukemia</tissue>
    </source>
</reference>
<reference key="20">
    <citation type="journal article" date="2014" name="Nat. Struct. Mol. Biol.">
        <title>Uncovering global SUMOylation signaling networks in a site-specific manner.</title>
        <authorList>
            <person name="Hendriks I.A."/>
            <person name="D'Souza R.C."/>
            <person name="Yang B."/>
            <person name="Verlaan-de Vries M."/>
            <person name="Mann M."/>
            <person name="Vertegaal A.C."/>
        </authorList>
    </citation>
    <scope>SUMOYLATION [LARGE SCALE ANALYSIS] AT LYS-145</scope>
    <scope>IDENTIFICATION BY MASS SPECTROMETRY [LARGE SCALE ANALYSIS]</scope>
</reference>
<reference key="21">
    <citation type="journal article" date="2017" name="Nat. Struct. Mol. Biol.">
        <title>Site-specific mapping of the human SUMO proteome reveals co-modification with phosphorylation.</title>
        <authorList>
            <person name="Hendriks I.A."/>
            <person name="Lyon D."/>
            <person name="Young C."/>
            <person name="Jensen L.J."/>
            <person name="Vertegaal A.C."/>
            <person name="Nielsen M.L."/>
        </authorList>
    </citation>
    <scope>SUMOYLATION [LARGE SCALE ANALYSIS] AT LYS-63 AND LYS-86</scope>
    <scope>IDENTIFICATION BY MASS SPECTROMETRY [LARGE SCALE ANALYSIS]</scope>
</reference>
<reference evidence="21" key="22">
    <citation type="journal article" date="1998" name="Nat. Struct. Biol.">
        <title>Solution structure of the DNA- and RPA-binding domain of the human repair factor XPA.</title>
        <authorList>
            <person name="Ikegami T."/>
            <person name="Kuraoka I."/>
            <person name="Saijo M."/>
            <person name="Kodo N."/>
            <person name="Kyogoku Y."/>
            <person name="Morikawa K."/>
            <person name="Tanaka K."/>
            <person name="Shirakawa M."/>
        </authorList>
    </citation>
    <scope>STRUCTURE BY NMR OF 98-219 IN COMPLEX WITH ZINC</scope>
    <scope>DNA-BINDING</scope>
    <scope>INTERACTION WITH RPA1</scope>
</reference>
<reference evidence="20" key="23">
    <citation type="journal article" date="1999" name="Biochemistry">
        <title>Interactions of human nucleotide excision repair protein XPA with DNA and RPA70 Delta C327: chemical shift mapping and 15N NMR relaxation studies.</title>
        <authorList>
            <person name="Buchko G.W."/>
            <person name="Daughdrill G.W."/>
            <person name="de Lorimier R."/>
            <person name="Sudha Rao B.K."/>
            <person name="Isern N.G."/>
            <person name="Lingbeck J.M."/>
            <person name="Taylor J.-S."/>
            <person name="Wold M.S."/>
            <person name="Gochin M."/>
            <person name="Spicer L.D."/>
            <person name="Lowry D.F."/>
            <person name="Kennedy M.A."/>
        </authorList>
    </citation>
    <scope>STRUCTURE BY NMR OF 98-208 IN COMPLEX WITH ZINC</scope>
    <scope>DNA-BINDING</scope>
    <scope>INTERACTION WITH RPA1</scope>
</reference>
<reference evidence="22" key="24">
    <citation type="journal article" date="2019" name="Nat. Commun.">
        <title>Structural basis of TFIIH activation for nucleotide excision repair.</title>
        <authorList>
            <person name="Kokic G."/>
            <person name="Chernev A."/>
            <person name="Tegunov D."/>
            <person name="Dienemann C."/>
            <person name="Urlaub H."/>
            <person name="Cramer P."/>
        </authorList>
    </citation>
    <scope>STRUCTURE BY ELECTRON MICROSCOPY (3.50 ANGSTROMS) OF NUCLEOTIDE EXCISION REPAIR INTERMEDIATE IN COMPLEX WITH DNA SUBSTRATE AND ZINC</scope>
    <scope>STIMULATES ERCC2/XPD HELICASE AND ERCC3/XPB DNA TRANSLOCASE</scope>
    <scope>DNA-BINDING</scope>
</reference>
<reference key="25">
    <citation type="journal article" date="1992" name="Hum. Genet.">
        <title>Molecular basis of group A Xeroderma pigmentosum: a missense mutation and two deletions located in a zinc finger consensus sequence of the XPAC gene.</title>
        <authorList>
            <person name="Satokata I."/>
            <person name="Tanaka K."/>
            <person name="Okada Y."/>
        </authorList>
    </citation>
    <scope>VARIANT XP-A PHE-108</scope>
</reference>
<reference key="26">
    <citation type="journal article" date="1992" name="Mutat. Res.">
        <title>Identification of splicing mutations of the last nucleotides of exons, a nonsense mutation, and a missense mutation of the XPAC gene as causes of group A Xeroderma pigmentosum.</title>
        <authorList>
            <person name="Satokata I."/>
            <person name="Tanaka K."/>
            <person name="Yuba S."/>
            <person name="Okada Y."/>
        </authorList>
    </citation>
    <scope>VARIANT XP-A ARG-244</scope>
</reference>
<reference key="27">
    <citation type="journal article" date="1998" name="Hum. Mutat.">
        <title>Distribution of mutations in the human Xeroderma pigmentosum group A gene and their relationships to the functional regions of the DNA damage recognition protein.</title>
        <authorList>
            <person name="States J.C."/>
            <person name="McDuffie E.R."/>
            <person name="Myrand S.P."/>
            <person name="McDowell M."/>
            <person name="Cleaver J.E."/>
        </authorList>
    </citation>
    <scope>VARIANT XP-A PHE-108</scope>
</reference>
<keyword id="KW-0002">3D-structure</keyword>
<keyword id="KW-0007">Acetylation</keyword>
<keyword id="KW-0225">Disease variant</keyword>
<keyword id="KW-0227">DNA damage</keyword>
<keyword id="KW-0234">DNA repair</keyword>
<keyword id="KW-0238">DNA-binding</keyword>
<keyword id="KW-1017">Isopeptide bond</keyword>
<keyword id="KW-0479">Metal-binding</keyword>
<keyword id="KW-0539">Nucleus</keyword>
<keyword id="KW-0597">Phosphoprotein</keyword>
<keyword id="KW-1267">Proteomics identification</keyword>
<keyword id="KW-1185">Reference proteome</keyword>
<keyword id="KW-0832">Ubl conjugation</keyword>
<keyword id="KW-0857">Xeroderma pigmentosum</keyword>
<keyword id="KW-0862">Zinc</keyword>
<keyword id="KW-0863">Zinc-finger</keyword>
<dbReference type="EMBL" id="D14533">
    <property type="protein sequence ID" value="BAA03403.1"/>
    <property type="molecule type" value="mRNA"/>
</dbReference>
<dbReference type="EMBL" id="BT019518">
    <property type="protein sequence ID" value="AAV38325.1"/>
    <property type="molecule type" value="mRNA"/>
</dbReference>
<dbReference type="EMBL" id="AF503166">
    <property type="protein sequence ID" value="AAM18969.1"/>
    <property type="molecule type" value="Genomic_DNA"/>
</dbReference>
<dbReference type="EMBL" id="AL445531">
    <property type="status" value="NOT_ANNOTATED_CDS"/>
    <property type="molecule type" value="Genomic_DNA"/>
</dbReference>
<dbReference type="EMBL" id="CH471105">
    <property type="protein sequence ID" value="EAW58855.1"/>
    <property type="molecule type" value="Genomic_DNA"/>
</dbReference>
<dbReference type="EMBL" id="BC014965">
    <property type="protein sequence ID" value="AAH14965.1"/>
    <property type="molecule type" value="mRNA"/>
</dbReference>
<dbReference type="EMBL" id="U16815">
    <property type="protein sequence ID" value="AAB60404.1"/>
    <property type="molecule type" value="Genomic_DNA"/>
</dbReference>
<dbReference type="EMBL" id="U10347">
    <property type="protein sequence ID" value="AAA92883.1"/>
    <property type="molecule type" value="Genomic_DNA"/>
</dbReference>
<dbReference type="EMBL" id="U10343">
    <property type="protein sequence ID" value="AAA92883.1"/>
    <property type="status" value="JOINED"/>
    <property type="molecule type" value="Genomic_DNA"/>
</dbReference>
<dbReference type="EMBL" id="U10344">
    <property type="protein sequence ID" value="AAA92883.1"/>
    <property type="status" value="JOINED"/>
    <property type="molecule type" value="Genomic_DNA"/>
</dbReference>
<dbReference type="EMBL" id="U10345">
    <property type="protein sequence ID" value="AAA92883.1"/>
    <property type="status" value="JOINED"/>
    <property type="molecule type" value="Genomic_DNA"/>
</dbReference>
<dbReference type="EMBL" id="U10346">
    <property type="protein sequence ID" value="AAA92883.1"/>
    <property type="status" value="JOINED"/>
    <property type="molecule type" value="Genomic_DNA"/>
</dbReference>
<dbReference type="CCDS" id="CCDS6729.1"/>
<dbReference type="PIR" id="I38886">
    <property type="entry name" value="I38886"/>
</dbReference>
<dbReference type="PIR" id="JG0190">
    <property type="entry name" value="JG0190"/>
</dbReference>
<dbReference type="RefSeq" id="NP_000371.1">
    <property type="nucleotide sequence ID" value="NM_000380.4"/>
</dbReference>
<dbReference type="PDB" id="1D4U">
    <property type="method" value="NMR"/>
    <property type="chains" value="A=98-208"/>
</dbReference>
<dbReference type="PDB" id="1XPA">
    <property type="method" value="NMR"/>
    <property type="chains" value="A=98-219"/>
</dbReference>
<dbReference type="PDB" id="2JNW">
    <property type="method" value="NMR"/>
    <property type="chains" value="B=67-80"/>
</dbReference>
<dbReference type="PDB" id="6J44">
    <property type="method" value="X-ray"/>
    <property type="resolution" value="2.06 A"/>
    <property type="chains" value="A=98-239"/>
</dbReference>
<dbReference type="PDB" id="6LAE">
    <property type="method" value="X-ray"/>
    <property type="resolution" value="2.81 A"/>
    <property type="chains" value="A/B=98-239"/>
</dbReference>
<dbReference type="PDB" id="6RO4">
    <property type="method" value="EM"/>
    <property type="resolution" value="3.50 A"/>
    <property type="chains" value="G=1-273"/>
</dbReference>
<dbReference type="PDB" id="7AD8">
    <property type="method" value="EM"/>
    <property type="resolution" value="3.50 A"/>
    <property type="chains" value="G=1-273"/>
</dbReference>
<dbReference type="PDB" id="8EBT">
    <property type="method" value="EM"/>
    <property type="resolution" value="3.90 A"/>
    <property type="chains" value="K=102-273"/>
</dbReference>
<dbReference type="PDB" id="8EBU">
    <property type="method" value="EM"/>
    <property type="resolution" value="3.30 A"/>
    <property type="chains" value="K=1-273"/>
</dbReference>
<dbReference type="PDB" id="8EBX">
    <property type="method" value="EM"/>
    <property type="resolution" value="3.60 A"/>
    <property type="chains" value="K=1-273"/>
</dbReference>
<dbReference type="PDB" id="8EBY">
    <property type="method" value="EM"/>
    <property type="resolution" value="3.60 A"/>
    <property type="chains" value="K=1-273"/>
</dbReference>
<dbReference type="PDBsum" id="1D4U"/>
<dbReference type="PDBsum" id="1XPA"/>
<dbReference type="PDBsum" id="2JNW"/>
<dbReference type="PDBsum" id="6J44"/>
<dbReference type="PDBsum" id="6LAE"/>
<dbReference type="PDBsum" id="6RO4"/>
<dbReference type="PDBsum" id="7AD8"/>
<dbReference type="PDBsum" id="8EBT"/>
<dbReference type="PDBsum" id="8EBU"/>
<dbReference type="PDBsum" id="8EBX"/>
<dbReference type="PDBsum" id="8EBY"/>
<dbReference type="BMRB" id="P23025"/>
<dbReference type="EMDB" id="EMD-27997"/>
<dbReference type="EMDB" id="EMD-27998"/>
<dbReference type="EMDB" id="EMD-28001"/>
<dbReference type="EMDB" id="EMD-28002"/>
<dbReference type="EMDB" id="EMD-29673"/>
<dbReference type="EMDB" id="EMD-4970"/>
<dbReference type="SASBDB" id="P23025"/>
<dbReference type="SMR" id="P23025"/>
<dbReference type="BioGRID" id="113344">
    <property type="interactions" value="87"/>
</dbReference>
<dbReference type="CORUM" id="P23025"/>
<dbReference type="DIP" id="DIP-24191N"/>
<dbReference type="ELM" id="P23025"/>
<dbReference type="FunCoup" id="P23025">
    <property type="interactions" value="1749"/>
</dbReference>
<dbReference type="IntAct" id="P23025">
    <property type="interactions" value="60"/>
</dbReference>
<dbReference type="MINT" id="P23025"/>
<dbReference type="STRING" id="9606.ENSP00000364270"/>
<dbReference type="BindingDB" id="P23025"/>
<dbReference type="ChEMBL" id="CHEMBL4105801"/>
<dbReference type="GlyGen" id="P23025">
    <property type="glycosylation" value="1 site, 1 O-linked glycan (1 site)"/>
</dbReference>
<dbReference type="iPTMnet" id="P23025"/>
<dbReference type="PhosphoSitePlus" id="P23025"/>
<dbReference type="BioMuta" id="XPA"/>
<dbReference type="DMDM" id="139816"/>
<dbReference type="jPOST" id="P23025"/>
<dbReference type="MassIVE" id="P23025"/>
<dbReference type="PaxDb" id="9606-ENSP00000364270"/>
<dbReference type="PeptideAtlas" id="P23025"/>
<dbReference type="ProteomicsDB" id="54051"/>
<dbReference type="Pumba" id="P23025"/>
<dbReference type="Antibodypedia" id="3603">
    <property type="antibodies" value="498 antibodies from 36 providers"/>
</dbReference>
<dbReference type="DNASU" id="7507"/>
<dbReference type="Ensembl" id="ENST00000375128.5">
    <property type="protein sequence ID" value="ENSP00000364270.5"/>
    <property type="gene ID" value="ENSG00000136936.11"/>
</dbReference>
<dbReference type="GeneID" id="7507"/>
<dbReference type="KEGG" id="hsa:7507"/>
<dbReference type="MANE-Select" id="ENST00000375128.5">
    <property type="protein sequence ID" value="ENSP00000364270.5"/>
    <property type="RefSeq nucleotide sequence ID" value="NM_000380.4"/>
    <property type="RefSeq protein sequence ID" value="NP_000371.1"/>
</dbReference>
<dbReference type="UCSC" id="uc004axr.5">
    <property type="organism name" value="human"/>
</dbReference>
<dbReference type="AGR" id="HGNC:12814"/>
<dbReference type="CTD" id="7507"/>
<dbReference type="DisGeNET" id="7507"/>
<dbReference type="GeneCards" id="XPA"/>
<dbReference type="GeneReviews" id="XPA"/>
<dbReference type="HGNC" id="HGNC:12814">
    <property type="gene designation" value="XPA"/>
</dbReference>
<dbReference type="HPA" id="ENSG00000136936">
    <property type="expression patterns" value="Low tissue specificity"/>
</dbReference>
<dbReference type="MalaCards" id="XPA"/>
<dbReference type="MIM" id="278700">
    <property type="type" value="phenotype"/>
</dbReference>
<dbReference type="MIM" id="611153">
    <property type="type" value="gene"/>
</dbReference>
<dbReference type="neXtProt" id="NX_P23025"/>
<dbReference type="OpenTargets" id="ENSG00000136936"/>
<dbReference type="Orphanet" id="910">
    <property type="disease" value="Xeroderma pigmentosum"/>
</dbReference>
<dbReference type="PharmGKB" id="PA368"/>
<dbReference type="VEuPathDB" id="HostDB:ENSG00000136936"/>
<dbReference type="eggNOG" id="KOG4017">
    <property type="taxonomic scope" value="Eukaryota"/>
</dbReference>
<dbReference type="GeneTree" id="ENSGT00390000002721"/>
<dbReference type="HOGENOM" id="CLU_053731_1_0_1"/>
<dbReference type="InParanoid" id="P23025"/>
<dbReference type="OMA" id="EFGEDTY"/>
<dbReference type="OrthoDB" id="68328at2759"/>
<dbReference type="PAN-GO" id="P23025">
    <property type="GO annotations" value="7 GO annotations based on evolutionary models"/>
</dbReference>
<dbReference type="PhylomeDB" id="P23025"/>
<dbReference type="TreeFam" id="TF101241"/>
<dbReference type="PathwayCommons" id="P23025"/>
<dbReference type="Reactome" id="R-HSA-5696395">
    <property type="pathway name" value="Formation of Incision Complex in GG-NER"/>
</dbReference>
<dbReference type="Reactome" id="R-HSA-5696400">
    <property type="pathway name" value="Dual Incision in GG-NER"/>
</dbReference>
<dbReference type="Reactome" id="R-HSA-6781823">
    <property type="pathway name" value="Formation of TC-NER Pre-Incision Complex"/>
</dbReference>
<dbReference type="Reactome" id="R-HSA-6782135">
    <property type="pathway name" value="Dual incision in TC-NER"/>
</dbReference>
<dbReference type="SignaLink" id="P23025"/>
<dbReference type="SIGNOR" id="P23025"/>
<dbReference type="BioGRID-ORCS" id="7507">
    <property type="hits" value="24 hits in 1158 CRISPR screens"/>
</dbReference>
<dbReference type="ChiTaRS" id="XPA">
    <property type="organism name" value="human"/>
</dbReference>
<dbReference type="EvolutionaryTrace" id="P23025"/>
<dbReference type="GeneWiki" id="XPA"/>
<dbReference type="GenomeRNAi" id="7507"/>
<dbReference type="Pharos" id="P23025">
    <property type="development level" value="Tchem"/>
</dbReference>
<dbReference type="PRO" id="PR:P23025"/>
<dbReference type="Proteomes" id="UP000005640">
    <property type="component" value="Chromosome 9"/>
</dbReference>
<dbReference type="RNAct" id="P23025">
    <property type="molecule type" value="protein"/>
</dbReference>
<dbReference type="Bgee" id="ENSG00000136936">
    <property type="expression patterns" value="Expressed in calcaneal tendon and 198 other cell types or tissues"/>
</dbReference>
<dbReference type="ExpressionAtlas" id="P23025">
    <property type="expression patterns" value="baseline and differential"/>
</dbReference>
<dbReference type="GO" id="GO:0005829">
    <property type="term" value="C:cytosol"/>
    <property type="evidence" value="ECO:0000314"/>
    <property type="project" value="HPA"/>
</dbReference>
<dbReference type="GO" id="GO:0016604">
    <property type="term" value="C:nuclear body"/>
    <property type="evidence" value="ECO:0000314"/>
    <property type="project" value="HPA"/>
</dbReference>
<dbReference type="GO" id="GO:0005654">
    <property type="term" value="C:nucleoplasm"/>
    <property type="evidence" value="ECO:0000314"/>
    <property type="project" value="HPA"/>
</dbReference>
<dbReference type="GO" id="GO:0000110">
    <property type="term" value="C:nucleotide-excision repair factor 1 complex"/>
    <property type="evidence" value="ECO:0000318"/>
    <property type="project" value="GO_Central"/>
</dbReference>
<dbReference type="GO" id="GO:0005634">
    <property type="term" value="C:nucleus"/>
    <property type="evidence" value="ECO:0000314"/>
    <property type="project" value="CAFA"/>
</dbReference>
<dbReference type="GO" id="GO:0003684">
    <property type="term" value="F:damaged DNA binding"/>
    <property type="evidence" value="ECO:0000314"/>
    <property type="project" value="UniProtKB"/>
</dbReference>
<dbReference type="GO" id="GO:0019904">
    <property type="term" value="F:protein domain specific binding"/>
    <property type="evidence" value="ECO:0000353"/>
    <property type="project" value="UniProtKB"/>
</dbReference>
<dbReference type="GO" id="GO:0042803">
    <property type="term" value="F:protein homodimerization activity"/>
    <property type="evidence" value="ECO:0000353"/>
    <property type="project" value="UniProtKB"/>
</dbReference>
<dbReference type="GO" id="GO:1990837">
    <property type="term" value="F:sequence-specific double-stranded DNA binding"/>
    <property type="evidence" value="ECO:0000314"/>
    <property type="project" value="ARUK-UCL"/>
</dbReference>
<dbReference type="GO" id="GO:0008270">
    <property type="term" value="F:zinc ion binding"/>
    <property type="evidence" value="ECO:0007669"/>
    <property type="project" value="UniProtKB-KW"/>
</dbReference>
<dbReference type="GO" id="GO:0006284">
    <property type="term" value="P:base-excision repair"/>
    <property type="evidence" value="ECO:0000318"/>
    <property type="project" value="GO_Central"/>
</dbReference>
<dbReference type="GO" id="GO:0006281">
    <property type="term" value="P:DNA repair"/>
    <property type="evidence" value="ECO:0000314"/>
    <property type="project" value="CAFA"/>
</dbReference>
<dbReference type="GO" id="GO:0008630">
    <property type="term" value="P:intrinsic apoptotic signaling pathway in response to DNA damage"/>
    <property type="evidence" value="ECO:0007669"/>
    <property type="project" value="Ensembl"/>
</dbReference>
<dbReference type="GO" id="GO:0035264">
    <property type="term" value="P:multicellular organism growth"/>
    <property type="evidence" value="ECO:0007669"/>
    <property type="project" value="Ensembl"/>
</dbReference>
<dbReference type="GO" id="GO:0006289">
    <property type="term" value="P:nucleotide-excision repair"/>
    <property type="evidence" value="ECO:0000315"/>
    <property type="project" value="CACAO"/>
</dbReference>
<dbReference type="GO" id="GO:1901255">
    <property type="term" value="P:nucleotide-excision repair involved in interstrand cross-link repair"/>
    <property type="evidence" value="ECO:0000318"/>
    <property type="project" value="GO_Central"/>
</dbReference>
<dbReference type="GO" id="GO:0000715">
    <property type="term" value="P:nucleotide-excision repair, DNA damage recognition"/>
    <property type="evidence" value="ECO:0000318"/>
    <property type="project" value="GO_Central"/>
</dbReference>
<dbReference type="GO" id="GO:0060261">
    <property type="term" value="P:positive regulation of transcription initiation by RNA polymerase II"/>
    <property type="evidence" value="ECO:0007669"/>
    <property type="project" value="Ensembl"/>
</dbReference>
<dbReference type="GO" id="GO:0034504">
    <property type="term" value="P:protein localization to nucleus"/>
    <property type="evidence" value="ECO:0000315"/>
    <property type="project" value="CAFA"/>
</dbReference>
<dbReference type="GO" id="GO:0010506">
    <property type="term" value="P:regulation of autophagy"/>
    <property type="evidence" value="ECO:0007669"/>
    <property type="project" value="Ensembl"/>
</dbReference>
<dbReference type="GO" id="GO:0006979">
    <property type="term" value="P:response to oxidative stress"/>
    <property type="evidence" value="ECO:0007669"/>
    <property type="project" value="Ensembl"/>
</dbReference>
<dbReference type="GO" id="GO:0009636">
    <property type="term" value="P:response to toxic substance"/>
    <property type="evidence" value="ECO:0007669"/>
    <property type="project" value="Ensembl"/>
</dbReference>
<dbReference type="GO" id="GO:0009650">
    <property type="term" value="P:UV protection"/>
    <property type="evidence" value="ECO:0000314"/>
    <property type="project" value="CAFA"/>
</dbReference>
<dbReference type="GO" id="GO:0070914">
    <property type="term" value="P:UV-damage excision repair"/>
    <property type="evidence" value="ECO:0000318"/>
    <property type="project" value="GO_Central"/>
</dbReference>
<dbReference type="CDD" id="cd21076">
    <property type="entry name" value="DBD_XPA"/>
    <property type="match status" value="1"/>
</dbReference>
<dbReference type="DisProt" id="DP00243"/>
<dbReference type="FunFam" id="3.90.530.10:FF:000001">
    <property type="entry name" value="DNA repair protein complementing XP-A cells"/>
    <property type="match status" value="1"/>
</dbReference>
<dbReference type="Gene3D" id="3.90.530.10">
    <property type="entry name" value="XPA C-terminal domain"/>
    <property type="match status" value="1"/>
</dbReference>
<dbReference type="IDEAL" id="IID00196"/>
<dbReference type="InterPro" id="IPR009061">
    <property type="entry name" value="DNA-bd_dom_put_sf"/>
</dbReference>
<dbReference type="InterPro" id="IPR000465">
    <property type="entry name" value="XPA/RAD14"/>
</dbReference>
<dbReference type="InterPro" id="IPR022656">
    <property type="entry name" value="XPA_C"/>
</dbReference>
<dbReference type="InterPro" id="IPR022658">
    <property type="entry name" value="XPA_CS"/>
</dbReference>
<dbReference type="InterPro" id="IPR037129">
    <property type="entry name" value="XPA_sf"/>
</dbReference>
<dbReference type="InterPro" id="IPR022652">
    <property type="entry name" value="Znf_XPA_CS"/>
</dbReference>
<dbReference type="NCBIfam" id="TIGR00598">
    <property type="entry name" value="rad14"/>
    <property type="match status" value="1"/>
</dbReference>
<dbReference type="PANTHER" id="PTHR10142">
    <property type="entry name" value="DNA REPAIR PROTEIN COMPLEMENTING XP-A CELLS"/>
    <property type="match status" value="1"/>
</dbReference>
<dbReference type="PANTHER" id="PTHR10142:SF0">
    <property type="entry name" value="DNA REPAIR PROTEIN COMPLEMENTING XP-A CELLS"/>
    <property type="match status" value="1"/>
</dbReference>
<dbReference type="Pfam" id="PF05181">
    <property type="entry name" value="XPA_C"/>
    <property type="match status" value="1"/>
</dbReference>
<dbReference type="Pfam" id="PF01286">
    <property type="entry name" value="XPA_N"/>
    <property type="match status" value="1"/>
</dbReference>
<dbReference type="SUPFAM" id="SSF57716">
    <property type="entry name" value="Glucocorticoid receptor-like (DNA-binding domain)"/>
    <property type="match status" value="1"/>
</dbReference>
<dbReference type="SUPFAM" id="SSF46955">
    <property type="entry name" value="Putative DNA-binding domain"/>
    <property type="match status" value="1"/>
</dbReference>
<dbReference type="PROSITE" id="PS00752">
    <property type="entry name" value="XPA_1"/>
    <property type="match status" value="1"/>
</dbReference>
<dbReference type="PROSITE" id="PS00753">
    <property type="entry name" value="XPA_2"/>
    <property type="match status" value="1"/>
</dbReference>
<feature type="initiator methionine" description="Removed" evidence="23 24">
    <location>
        <position position="1"/>
    </location>
</feature>
<feature type="chain" id="PRO_0000208648" description="DNA repair protein complementing XP-A cells">
    <location>
        <begin position="2"/>
        <end position="273"/>
    </location>
</feature>
<feature type="zinc finger region" evidence="18 19">
    <location>
        <begin position="105"/>
        <end position="129"/>
    </location>
</feature>
<feature type="region of interest" description="Interaction with CEP164 and required for UV resistance" evidence="8">
    <location>
        <begin position="4"/>
        <end position="97"/>
    </location>
</feature>
<feature type="short sequence motif" description="Nuclear localization signal" evidence="1">
    <location>
        <begin position="26"/>
        <end position="47"/>
    </location>
</feature>
<feature type="binding site" evidence="10 20 21 22">
    <location>
        <position position="105"/>
    </location>
    <ligand>
        <name>Zn(2+)</name>
        <dbReference type="ChEBI" id="CHEBI:29105"/>
    </ligand>
</feature>
<feature type="binding site" evidence="10 20 21 22">
    <location>
        <position position="108"/>
    </location>
    <ligand>
        <name>Zn(2+)</name>
        <dbReference type="ChEBI" id="CHEBI:29105"/>
    </ligand>
</feature>
<feature type="binding site" evidence="10 20 21 22">
    <location>
        <position position="126"/>
    </location>
    <ligand>
        <name>Zn(2+)</name>
        <dbReference type="ChEBI" id="CHEBI:29105"/>
    </ligand>
</feature>
<feature type="binding site" evidence="10 20 21 22">
    <location>
        <position position="129"/>
    </location>
    <ligand>
        <name>Zn(2+)</name>
        <dbReference type="ChEBI" id="CHEBI:29105"/>
    </ligand>
</feature>
<feature type="modified residue" description="N-acetylalanine" evidence="23 24">
    <location>
        <position position="2"/>
    </location>
</feature>
<feature type="modified residue" description="Phosphoserine" evidence="6 25">
    <location>
        <position position="196"/>
    </location>
</feature>
<feature type="cross-link" description="Glycyl lysine isopeptide (Lys-Gly) (interchain with G-Cter in SUMO2)" evidence="27">
    <location>
        <position position="63"/>
    </location>
</feature>
<feature type="cross-link" description="Glycyl lysine isopeptide (Lys-Gly) (interchain with G-Cter in SUMO2)" evidence="27">
    <location>
        <position position="86"/>
    </location>
</feature>
<feature type="cross-link" description="Glycyl lysine isopeptide (Lys-Gly) (interchain with G-Cter in SUMO2)" evidence="26">
    <location>
        <position position="145"/>
    </location>
</feature>
<feature type="sequence variant" id="VAR_014203" evidence="16">
    <location>
        <position position="78"/>
    </location>
</feature>
<feature type="sequence variant" id="VAR_007727" description="In XP-A.">
    <original>P</original>
    <variation>L</variation>
    <location>
        <position position="94"/>
    </location>
</feature>
<feature type="sequence variant" id="VAR_037907" description="In dbSNP:rs10983315.">
    <original>V</original>
    <variation>I</variation>
    <location>
        <position position="97"/>
    </location>
</feature>
<feature type="sequence variant" id="VAR_007728" description="In XP-A; severe form; dbSNP:rs104894131." evidence="4 14">
    <original>C</original>
    <variation>F</variation>
    <location>
        <position position="108"/>
    </location>
</feature>
<feature type="sequence variant" id="VAR_007729" description="In XP-A; dbSNP:rs1324310300.">
    <original>R</original>
    <variation>K</variation>
    <location>
        <position position="130"/>
    </location>
</feature>
<feature type="sequence variant" id="VAR_007730" description="In XP-A; dbSNP:rs746617574.">
    <original>Q</original>
    <variation>H</variation>
    <location>
        <position position="185"/>
    </location>
</feature>
<feature type="sequence variant" id="VAR_014799" description="In dbSNP:rs1805160.">
    <original>R</original>
    <variation>Q</variation>
    <location>
        <position position="228"/>
    </location>
</feature>
<feature type="sequence variant" id="VAR_029325" description="In dbSNP:rs3176749.">
    <original>V</original>
    <variation>L</variation>
    <location>
        <position position="234"/>
    </location>
</feature>
<feature type="sequence variant" id="VAR_007731" description="In XP-A; mild form; dbSNP:rs144725456." evidence="5">
    <original>H</original>
    <variation>R</variation>
    <location>
        <position position="244"/>
    </location>
</feature>
<feature type="sequence variant" id="VAR_020324" description="In dbSNP:rs3176750.">
    <original>L</original>
    <variation>V</variation>
    <location>
        <position position="252"/>
    </location>
</feature>
<feature type="sequence variant" id="VAR_061987" description="In dbSNP:rs57519506.">
    <original>M</original>
    <variation>V</variation>
    <location>
        <position position="256"/>
    </location>
</feature>
<feature type="strand" evidence="28">
    <location>
        <begin position="72"/>
        <end position="75"/>
    </location>
</feature>
<feature type="helix" evidence="29">
    <location>
        <begin position="99"/>
        <end position="101"/>
    </location>
</feature>
<feature type="turn" evidence="29">
    <location>
        <begin position="106"/>
        <end position="108"/>
    </location>
</feature>
<feature type="strand" evidence="29">
    <location>
        <begin position="111"/>
        <end position="113"/>
    </location>
</feature>
<feature type="helix" evidence="29">
    <location>
        <begin position="116"/>
        <end position="121"/>
    </location>
</feature>
<feature type="turn" evidence="29">
    <location>
        <begin position="127"/>
        <end position="129"/>
    </location>
</feature>
<feature type="turn" evidence="29">
    <location>
        <begin position="132"/>
        <end position="136"/>
    </location>
</feature>
<feature type="strand" evidence="29">
    <location>
        <begin position="138"/>
        <end position="140"/>
    </location>
</feature>
<feature type="helix" evidence="29">
    <location>
        <begin position="141"/>
        <end position="148"/>
    </location>
</feature>
<feature type="helix" evidence="29">
    <location>
        <begin position="152"/>
        <end position="156"/>
    </location>
</feature>
<feature type="strand" evidence="29">
    <location>
        <begin position="158"/>
        <end position="160"/>
    </location>
</feature>
<feature type="strand" evidence="29">
    <location>
        <begin position="165"/>
        <end position="167"/>
    </location>
</feature>
<feature type="turn" evidence="30">
    <location>
        <begin position="170"/>
        <end position="172"/>
    </location>
</feature>
<feature type="strand" evidence="31">
    <location>
        <begin position="173"/>
        <end position="175"/>
    </location>
</feature>
<feature type="strand" evidence="29">
    <location>
        <begin position="178"/>
        <end position="182"/>
    </location>
</feature>
<feature type="helix" evidence="29">
    <location>
        <begin position="183"/>
        <end position="194"/>
    </location>
</feature>
<feature type="helix" evidence="29">
    <location>
        <begin position="197"/>
        <end position="230"/>
    </location>
</feature>
<feature type="turn" evidence="31">
    <location>
        <begin position="232"/>
        <end position="234"/>
    </location>
</feature>
<feature type="strand" evidence="31">
    <location>
        <begin position="256"/>
        <end position="261"/>
    </location>
</feature>
<feature type="turn" evidence="31">
    <location>
        <begin position="262"/>
        <end position="264"/>
    </location>
</feature>
<feature type="strand" evidence="31">
    <location>
        <begin position="267"/>
        <end position="271"/>
    </location>
</feature>
<evidence type="ECO:0000255" key="1"/>
<evidence type="ECO:0000269" key="2">
    <source>
    </source>
</evidence>
<evidence type="ECO:0000269" key="3">
    <source>
    </source>
</evidence>
<evidence type="ECO:0000269" key="4">
    <source>
    </source>
</evidence>
<evidence type="ECO:0000269" key="5">
    <source>
    </source>
</evidence>
<evidence type="ECO:0000269" key="6">
    <source>
    </source>
</evidence>
<evidence type="ECO:0000269" key="7">
    <source>
    </source>
</evidence>
<evidence type="ECO:0000269" key="8">
    <source>
    </source>
</evidence>
<evidence type="ECO:0000269" key="9">
    <source>
    </source>
</evidence>
<evidence type="ECO:0000269" key="10">
    <source>
    </source>
</evidence>
<evidence type="ECO:0000269" key="11">
    <source>
    </source>
</evidence>
<evidence type="ECO:0000269" key="12">
    <source>
    </source>
</evidence>
<evidence type="ECO:0000269" key="13">
    <source>
    </source>
</evidence>
<evidence type="ECO:0000269" key="14">
    <source>
    </source>
</evidence>
<evidence type="ECO:0000269" key="15">
    <source>
    </source>
</evidence>
<evidence type="ECO:0000269" key="16">
    <source ref="3"/>
</evidence>
<evidence type="ECO:0000305" key="17"/>
<evidence type="ECO:0000305" key="18">
    <source>
    </source>
</evidence>
<evidence type="ECO:0000305" key="19">
    <source>
    </source>
</evidence>
<evidence type="ECO:0007744" key="20">
    <source>
        <dbReference type="PDB" id="1D4U"/>
    </source>
</evidence>
<evidence type="ECO:0007744" key="21">
    <source>
        <dbReference type="PDB" id="1XPA"/>
    </source>
</evidence>
<evidence type="ECO:0007744" key="22">
    <source>
        <dbReference type="PDB" id="6RO4"/>
    </source>
</evidence>
<evidence type="ECO:0007744" key="23">
    <source>
    </source>
</evidence>
<evidence type="ECO:0007744" key="24">
    <source>
    </source>
</evidence>
<evidence type="ECO:0007744" key="25">
    <source>
    </source>
</evidence>
<evidence type="ECO:0007744" key="26">
    <source>
    </source>
</evidence>
<evidence type="ECO:0007744" key="27">
    <source>
    </source>
</evidence>
<evidence type="ECO:0007829" key="28">
    <source>
        <dbReference type="PDB" id="2JNW"/>
    </source>
</evidence>
<evidence type="ECO:0007829" key="29">
    <source>
        <dbReference type="PDB" id="6J44"/>
    </source>
</evidence>
<evidence type="ECO:0007829" key="30">
    <source>
        <dbReference type="PDB" id="6RO4"/>
    </source>
</evidence>
<evidence type="ECO:0007829" key="31">
    <source>
        <dbReference type="PDB" id="8EBU"/>
    </source>
</evidence>
<organism>
    <name type="scientific">Homo sapiens</name>
    <name type="common">Human</name>
    <dbReference type="NCBI Taxonomy" id="9606"/>
    <lineage>
        <taxon>Eukaryota</taxon>
        <taxon>Metazoa</taxon>
        <taxon>Chordata</taxon>
        <taxon>Craniata</taxon>
        <taxon>Vertebrata</taxon>
        <taxon>Euteleostomi</taxon>
        <taxon>Mammalia</taxon>
        <taxon>Eutheria</taxon>
        <taxon>Euarchontoglires</taxon>
        <taxon>Primates</taxon>
        <taxon>Haplorrhini</taxon>
        <taxon>Catarrhini</taxon>
        <taxon>Hominidae</taxon>
        <taxon>Homo</taxon>
    </lineage>
</organism>